<organism>
    <name type="scientific">Caenorhabditis elegans</name>
    <dbReference type="NCBI Taxonomy" id="6239"/>
    <lineage>
        <taxon>Eukaryota</taxon>
        <taxon>Metazoa</taxon>
        <taxon>Ecdysozoa</taxon>
        <taxon>Nematoda</taxon>
        <taxon>Chromadorea</taxon>
        <taxon>Rhabditida</taxon>
        <taxon>Rhabditina</taxon>
        <taxon>Rhabditomorpha</taxon>
        <taxon>Rhabditoidea</taxon>
        <taxon>Rhabditidae</taxon>
        <taxon>Peloderinae</taxon>
        <taxon>Caenorhabditis</taxon>
    </lineage>
</organism>
<comment type="function">
    <text evidence="4 5">May play a functionally redundant role in embryogenesis.</text>
</comment>
<comment type="subcellular location">
    <subcellularLocation>
        <location evidence="5">Nucleus</location>
    </subcellularLocation>
</comment>
<comment type="alternative products">
    <event type="alternative splicing"/>
    <isoform>
        <id>Q09511-1</id>
        <name>a</name>
        <sequence type="displayed"/>
    </isoform>
    <isoform>
        <id>Q09511-2</id>
        <name>b</name>
        <sequence type="described" ref="VSP_012275 VSP_012276"/>
    </isoform>
</comment>
<comment type="PTM">
    <text evidence="1">Extensively phosphorylated on serine residues in the RS domain.</text>
</comment>
<comment type="similarity">
    <text evidence="6">Belongs to the splicing factor SR family.</text>
</comment>
<protein>
    <recommendedName>
        <fullName>Probable splicing factor, arginine/serine-rich 4</fullName>
    </recommendedName>
    <alternativeName>
        <fullName>CeSC35</fullName>
    </alternativeName>
    <alternativeName>
        <fullName>RNA-binding protein srp-2</fullName>
    </alternativeName>
</protein>
<feature type="chain" id="PRO_0000081951" description="Probable splicing factor, arginine/serine-rich 4">
    <location>
        <begin position="1"/>
        <end position="196"/>
    </location>
</feature>
<feature type="domain" description="RRM" evidence="2">
    <location>
        <begin position="19"/>
        <end position="97"/>
    </location>
</feature>
<feature type="region of interest" description="Disordered" evidence="3">
    <location>
        <begin position="91"/>
        <end position="196"/>
    </location>
</feature>
<feature type="compositionally biased region" description="Basic and acidic residues" evidence="3">
    <location>
        <begin position="91"/>
        <end position="106"/>
    </location>
</feature>
<feature type="compositionally biased region" description="Basic residues" evidence="3">
    <location>
        <begin position="112"/>
        <end position="141"/>
    </location>
</feature>
<feature type="compositionally biased region" description="Basic and acidic residues" evidence="3">
    <location>
        <begin position="145"/>
        <end position="160"/>
    </location>
</feature>
<feature type="compositionally biased region" description="Basic and acidic residues" evidence="3">
    <location>
        <begin position="167"/>
        <end position="176"/>
    </location>
</feature>
<feature type="compositionally biased region" description="Low complexity" evidence="3">
    <location>
        <begin position="184"/>
        <end position="196"/>
    </location>
</feature>
<feature type="splice variant" id="VSP_012275" description="In isoform b." evidence="6">
    <original>SRSPRRRSRSP</original>
    <variation>TAAEPDVAELS</variation>
    <location>
        <begin position="116"/>
        <end position="126"/>
    </location>
</feature>
<feature type="splice variant" id="VSP_012276" description="In isoform b." evidence="6">
    <location>
        <begin position="127"/>
        <end position="196"/>
    </location>
</feature>
<proteinExistence type="inferred from homology"/>
<keyword id="KW-0025">Alternative splicing</keyword>
<keyword id="KW-0217">Developmental protein</keyword>
<keyword id="KW-0507">mRNA processing</keyword>
<keyword id="KW-0508">mRNA splicing</keyword>
<keyword id="KW-0539">Nucleus</keyword>
<keyword id="KW-0597">Phosphoprotein</keyword>
<keyword id="KW-1185">Reference proteome</keyword>
<keyword id="KW-0694">RNA-binding</keyword>
<reference key="1">
    <citation type="journal article" date="1998" name="Science">
        <title>Genome sequence of the nematode C. elegans: a platform for investigating biology.</title>
        <authorList>
            <consortium name="The C. elegans sequencing consortium"/>
        </authorList>
    </citation>
    <scope>NUCLEOTIDE SEQUENCE [LARGE SCALE GENOMIC DNA]</scope>
    <scope>ALTERNATIVE SPLICING</scope>
    <source>
        <strain>Bristol N2</strain>
    </source>
</reference>
<reference key="2">
    <citation type="journal article" date="2000" name="EMBO J.">
        <title>Functional characterization of SR and SR-related genes in Caenorhabditis elegans.</title>
        <authorList>
            <person name="Longman D."/>
            <person name="Johnstone I.L."/>
            <person name="Caceres J.F."/>
        </authorList>
    </citation>
    <scope>IDENTIFICATION</scope>
    <scope>FUNCTION</scope>
</reference>
<reference key="3">
    <citation type="journal article" date="2000" name="Mech. Dev.">
        <title>Unique and redundant functions of SR proteins, a conserved family of splicing factors, in Caenorhabditis elegans development.</title>
        <authorList>
            <person name="Kawano T."/>
            <person name="Fujita M."/>
            <person name="Sakamoto H."/>
        </authorList>
    </citation>
    <scope>FUNCTION</scope>
    <scope>SUBCELLULAR LOCATION</scope>
</reference>
<evidence type="ECO:0000250" key="1"/>
<evidence type="ECO:0000255" key="2">
    <source>
        <dbReference type="PROSITE-ProRule" id="PRU00176"/>
    </source>
</evidence>
<evidence type="ECO:0000256" key="3">
    <source>
        <dbReference type="SAM" id="MobiDB-lite"/>
    </source>
</evidence>
<evidence type="ECO:0000269" key="4">
    <source>
    </source>
</evidence>
<evidence type="ECO:0000269" key="5">
    <source>
    </source>
</evidence>
<evidence type="ECO:0000305" key="6"/>
<dbReference type="EMBL" id="FO081042">
    <property type="protein sequence ID" value="CCD68734.1"/>
    <property type="molecule type" value="Genomic_DNA"/>
</dbReference>
<dbReference type="EMBL" id="FO081042">
    <property type="protein sequence ID" value="CCD68735.1"/>
    <property type="molecule type" value="Genomic_DNA"/>
</dbReference>
<dbReference type="PIR" id="T15917">
    <property type="entry name" value="T15917"/>
</dbReference>
<dbReference type="RefSeq" id="NP_001379856.1">
    <molecule id="Q09511-1"/>
    <property type="nucleotide sequence ID" value="NM_001393068.1"/>
</dbReference>
<dbReference type="RefSeq" id="NP_495013.1">
    <property type="nucleotide sequence ID" value="NM_062612.4"/>
</dbReference>
<dbReference type="RefSeq" id="NP_495014.1">
    <molecule id="Q09511-2"/>
    <property type="nucleotide sequence ID" value="NM_062613.4"/>
</dbReference>
<dbReference type="SMR" id="Q09511"/>
<dbReference type="BioGRID" id="39259">
    <property type="interactions" value="16"/>
</dbReference>
<dbReference type="DIP" id="DIP-26638N"/>
<dbReference type="FunCoup" id="Q09511">
    <property type="interactions" value="2804"/>
</dbReference>
<dbReference type="STRING" id="6239.EEED8.7a.1"/>
<dbReference type="iPTMnet" id="Q09511"/>
<dbReference type="PaxDb" id="6239-EEED8.7a"/>
<dbReference type="PeptideAtlas" id="Q09511"/>
<dbReference type="EnsemblMetazoa" id="EEED8.7a.1">
    <molecule id="Q09511-1"/>
    <property type="protein sequence ID" value="EEED8.7a.1"/>
    <property type="gene ID" value="WBGene00004701"/>
</dbReference>
<dbReference type="EnsemblMetazoa" id="EEED8.7b.1">
    <molecule id="Q09511-2"/>
    <property type="protein sequence ID" value="EEED8.7b.1"/>
    <property type="gene ID" value="WBGene00004701"/>
</dbReference>
<dbReference type="EnsemblMetazoa" id="EEED8.7b.2">
    <molecule id="Q09511-2"/>
    <property type="protein sequence ID" value="EEED8.7b.2"/>
    <property type="gene ID" value="WBGene00004701"/>
</dbReference>
<dbReference type="GeneID" id="173915"/>
<dbReference type="KEGG" id="cel:CELE_EEED8.7"/>
<dbReference type="UCSC" id="EEED8.7a">
    <molecule id="Q09511-1"/>
    <property type="organism name" value="c. elegans"/>
</dbReference>
<dbReference type="AGR" id="WB:WBGene00004701"/>
<dbReference type="CTD" id="173915"/>
<dbReference type="WormBase" id="EEED8.7a">
    <molecule id="Q09511-1"/>
    <property type="protein sequence ID" value="CE01891"/>
    <property type="gene ID" value="WBGene00004701"/>
    <property type="gene designation" value="rsp-4"/>
</dbReference>
<dbReference type="WormBase" id="EEED8.7b">
    <molecule id="Q09511-2"/>
    <property type="protein sequence ID" value="CE27910"/>
    <property type="gene ID" value="WBGene00004701"/>
    <property type="gene designation" value="rsp-4"/>
</dbReference>
<dbReference type="eggNOG" id="KOG4207">
    <property type="taxonomic scope" value="Eukaryota"/>
</dbReference>
<dbReference type="GeneTree" id="ENSGT00940000154883"/>
<dbReference type="HOGENOM" id="CLU_012062_10_3_1"/>
<dbReference type="InParanoid" id="Q09511"/>
<dbReference type="OMA" id="PLIRCDV"/>
<dbReference type="OrthoDB" id="8093034at2759"/>
<dbReference type="Reactome" id="R-CEL-159236">
    <property type="pathway name" value="Transport of Mature mRNA derived from an Intron-Containing Transcript"/>
</dbReference>
<dbReference type="Reactome" id="R-CEL-72163">
    <property type="pathway name" value="mRNA Splicing - Major Pathway"/>
</dbReference>
<dbReference type="Reactome" id="R-CEL-72165">
    <property type="pathway name" value="mRNA Splicing - Minor Pathway"/>
</dbReference>
<dbReference type="Reactome" id="R-CEL-72187">
    <property type="pathway name" value="mRNA 3'-end processing"/>
</dbReference>
<dbReference type="Reactome" id="R-CEL-72203">
    <property type="pathway name" value="Processing of Capped Intron-Containing Pre-mRNA"/>
</dbReference>
<dbReference type="Reactome" id="R-CEL-73856">
    <property type="pathway name" value="RNA Polymerase II Transcription Termination"/>
</dbReference>
<dbReference type="PRO" id="PR:Q09511"/>
<dbReference type="Proteomes" id="UP000001940">
    <property type="component" value="Chromosome II"/>
</dbReference>
<dbReference type="Bgee" id="WBGene00004701">
    <property type="expression patterns" value="Expressed in embryo and 4 other cell types or tissues"/>
</dbReference>
<dbReference type="GO" id="GO:0016607">
    <property type="term" value="C:nuclear speck"/>
    <property type="evidence" value="ECO:0000318"/>
    <property type="project" value="GO_Central"/>
</dbReference>
<dbReference type="GO" id="GO:0005634">
    <property type="term" value="C:nucleus"/>
    <property type="evidence" value="ECO:0000314"/>
    <property type="project" value="UniProtKB"/>
</dbReference>
<dbReference type="GO" id="GO:0003723">
    <property type="term" value="F:RNA binding"/>
    <property type="evidence" value="ECO:0000250"/>
    <property type="project" value="WormBase"/>
</dbReference>
<dbReference type="GO" id="GO:0000398">
    <property type="term" value="P:mRNA splicing, via spliceosome"/>
    <property type="evidence" value="ECO:0000250"/>
    <property type="project" value="WormBase"/>
</dbReference>
<dbReference type="GO" id="GO:0000381">
    <property type="term" value="P:regulation of alternative mRNA splicing, via spliceosome"/>
    <property type="evidence" value="ECO:0000318"/>
    <property type="project" value="GO_Central"/>
</dbReference>
<dbReference type="CDD" id="cd12311">
    <property type="entry name" value="RRM_SRSF2_SRSF8"/>
    <property type="match status" value="1"/>
</dbReference>
<dbReference type="FunFam" id="3.30.70.330:FF:000947">
    <property type="entry name" value="Probable splicing factor, arginine/serine-rich 4"/>
    <property type="match status" value="1"/>
</dbReference>
<dbReference type="Gene3D" id="3.30.70.330">
    <property type="match status" value="1"/>
</dbReference>
<dbReference type="InterPro" id="IPR012677">
    <property type="entry name" value="Nucleotide-bd_a/b_plait_sf"/>
</dbReference>
<dbReference type="InterPro" id="IPR035979">
    <property type="entry name" value="RBD_domain_sf"/>
</dbReference>
<dbReference type="InterPro" id="IPR050441">
    <property type="entry name" value="RBM"/>
</dbReference>
<dbReference type="InterPro" id="IPR000504">
    <property type="entry name" value="RRM_dom"/>
</dbReference>
<dbReference type="PANTHER" id="PTHR48034">
    <property type="entry name" value="TRANSFORMER-2 SEX-DETERMINING PROTEIN-RELATED"/>
    <property type="match status" value="1"/>
</dbReference>
<dbReference type="Pfam" id="PF00076">
    <property type="entry name" value="RRM_1"/>
    <property type="match status" value="1"/>
</dbReference>
<dbReference type="SMART" id="SM00360">
    <property type="entry name" value="RRM"/>
    <property type="match status" value="1"/>
</dbReference>
<dbReference type="SUPFAM" id="SSF54928">
    <property type="entry name" value="RNA-binding domain, RBD"/>
    <property type="match status" value="1"/>
</dbReference>
<dbReference type="PROSITE" id="PS50102">
    <property type="entry name" value="RRM"/>
    <property type="match status" value="1"/>
</dbReference>
<sequence length="196" mass="22588">MSRGGGGDRRAAPDINGLTSLKIDNLSYQTTPNDLRRTFERYGDIGDVHIPRDKYSRQSKGFGFVRFYERRDAEHALDRTDGKLVDGRELRVTLAKYDRPSDERGGRGGGGGRRRSRSPRRRSRSPRYSRSRSPRRSRSRTRSPPSRDRRDSPDRRDNSRSRSRSPPPREDGSPKERRSRSRSASRSPSRSRSNSR</sequence>
<gene>
    <name type="primary">rsp-4</name>
    <name type="synonym">srp-2</name>
    <name type="ORF">EEED8.7</name>
</gene>
<name>RSP4_CAEEL</name>
<accession>Q09511</accession>
<accession>Q95QN7</accession>